<comment type="function">
    <text evidence="1 3 4">Catalyzes the NAD(+)-dependent oxidative decarboxylation of homoisocitrate to 2-oxoadipate (alpha-ketoadipate), a reaction involved in lysine biosynthesis through the alpha-aminoadipate pathway. In addition, has high activity with isocitrate, but is inactive with 3-isopropylmalate.</text>
</comment>
<comment type="catalytic activity">
    <reaction evidence="1 2 3 4">
        <text>(2R,3S)-homoisocitrate + NAD(+) = 2-oxoadipate + CO2 + NADH</text>
        <dbReference type="Rhea" id="RHEA:11900"/>
        <dbReference type="ChEBI" id="CHEBI:15404"/>
        <dbReference type="ChEBI" id="CHEBI:16526"/>
        <dbReference type="ChEBI" id="CHEBI:57499"/>
        <dbReference type="ChEBI" id="CHEBI:57540"/>
        <dbReference type="ChEBI" id="CHEBI:57945"/>
        <dbReference type="EC" id="1.1.1.286"/>
    </reaction>
    <physiologicalReaction direction="left-to-right" evidence="7">
        <dbReference type="Rhea" id="RHEA:11901"/>
    </physiologicalReaction>
</comment>
<comment type="catalytic activity">
    <reaction evidence="1 4">
        <text>D-threo-isocitrate + NAD(+) = 2-oxoglutarate + CO2 + NADH</text>
        <dbReference type="Rhea" id="RHEA:23632"/>
        <dbReference type="ChEBI" id="CHEBI:15562"/>
        <dbReference type="ChEBI" id="CHEBI:16526"/>
        <dbReference type="ChEBI" id="CHEBI:16810"/>
        <dbReference type="ChEBI" id="CHEBI:57540"/>
        <dbReference type="ChEBI" id="CHEBI:57945"/>
        <dbReference type="EC" id="1.1.1.286"/>
    </reaction>
    <physiologicalReaction direction="left-to-right" evidence="7">
        <dbReference type="Rhea" id="RHEA:23633"/>
    </physiologicalReaction>
</comment>
<comment type="cofactor">
    <cofactor evidence="4">
        <name>Mg(2+)</name>
        <dbReference type="ChEBI" id="CHEBI:18420"/>
    </cofactor>
    <text evidence="4">Binds 1 Mg(2+) ion per subunit.</text>
</comment>
<comment type="biophysicochemical properties">
    <kinetics>
        <KM evidence="1">7486 uM for (1R,2S)-homoisocitrate</KM>
        <KM evidence="1">405 uM for D-threo-isocitrate</KM>
        <KM evidence="4">210 uM for (1R,2S)-homoisocitrate</KM>
        <KM evidence="4">290 uM for D-threo-isocitrate</KM>
        <text>kcat is 33 sec(-1) with (1R,2S)-homoisocitrate as substrate. kcat is 76 sec(-1) with D-threo-isocitrate as substrate.</text>
    </kinetics>
</comment>
<comment type="pathway">
    <text evidence="1">Amino-acid biosynthesis; L-lysine biosynthesis via AAA pathway; L-alpha-aminoadipate from 2-oxoglutarate: step 4/5.</text>
</comment>
<comment type="subunit">
    <text evidence="1 2">Homotetramer. Dimer of dimers. The homotetramer can transiently dissociate into homodimers.</text>
</comment>
<comment type="disruption phenotype">
    <text evidence="1">Does not grow on minimal medium. Requires alpha-aminoadipate or lysine for growth.</text>
</comment>
<comment type="miscellaneous">
    <text>In vitro directed evolution leads to mutagenesis of key residues and increased activity with 3-isopropylmalate.</text>
</comment>
<comment type="similarity">
    <text evidence="6">Belongs to the isocitrate and isopropylmalate dehydrogenases family.</text>
</comment>
<reference key="1">
    <citation type="journal article" date="2003" name="J. Biol. Chem.">
        <title>Characterization of homoisocitrate dehydrogenase involved in lysine biosynthesis of an extremely thermophilic bacterium, Thermus thermophilus HB27, and evolutionary implication of beta-decarboxylating dehydrogenase.</title>
        <authorList>
            <person name="Miyazaki J."/>
            <person name="Kobashi N."/>
            <person name="Nishiyama M."/>
            <person name="Yamane H."/>
        </authorList>
    </citation>
    <scope>NUCLEOTIDE SEQUENCE [GENOMIC DNA]</scope>
    <scope>CATALYTIC ACTIVITY</scope>
    <scope>FUNCTION</scope>
    <scope>SUBUNIT</scope>
    <scope>DISRUPTION PHENOTYPE</scope>
    <scope>PATHWAY</scope>
    <scope>BIOPHYSICOCHEMICAL PROPERTIES</scope>
    <scope>MUTAGENESIS OF ARG-85</scope>
    <source>
        <strain>ATCC BAA-163 / DSM 7039 / HB27</strain>
    </source>
</reference>
<reference key="2">
    <citation type="journal article" date="2004" name="Nat. Biotechnol.">
        <title>The genome sequence of the extreme thermophile Thermus thermophilus.</title>
        <authorList>
            <person name="Henne A."/>
            <person name="Brueggemann H."/>
            <person name="Raasch C."/>
            <person name="Wiezer A."/>
            <person name="Hartsch T."/>
            <person name="Liesegang H."/>
            <person name="Johann A."/>
            <person name="Lienard T."/>
            <person name="Gohl O."/>
            <person name="Martinez-Arias R."/>
            <person name="Jacobi C."/>
            <person name="Starkuviene V."/>
            <person name="Schlenczeck S."/>
            <person name="Dencker S."/>
            <person name="Huber R."/>
            <person name="Klenk H.-P."/>
            <person name="Kramer W."/>
            <person name="Merkl R."/>
            <person name="Gottschalk G."/>
            <person name="Fritz H.-J."/>
        </authorList>
    </citation>
    <scope>NUCLEOTIDE SEQUENCE [LARGE SCALE GENOMIC DNA]</scope>
    <source>
        <strain>ATCC BAA-163 / DSM 7039 / HB27</strain>
    </source>
</reference>
<reference key="3">
    <citation type="journal article" date="2005" name="J. Bacteriol.">
        <title>Crystal structure of tetrameric homoisocitrate dehydrogenase from an extreme thermophile, Thermus thermophilus: involvement of hydrophobic dimer-dimer interaction in extremely high thermotolerance.</title>
        <authorList>
            <person name="Miyazaki J."/>
            <person name="Asada K."/>
            <person name="Fushinobu S."/>
            <person name="Kuzuyama T."/>
            <person name="Nishiyama M."/>
        </authorList>
    </citation>
    <scope>X-RAY CRYSTALLOGRAPHY (1.85 ANGSTROMS)</scope>
    <scope>CATALYTIC ACTIVITY</scope>
    <scope>MUTAGENESIS OF TYR-125 AND VAL-135</scope>
    <scope>SUBUNIT</scope>
    <source>
        <strain>ATCC BAA-163 / DSM 7039 / HB27</strain>
    </source>
</reference>
<reference key="4">
    <citation type="journal article" date="2010" name="Biochem. J.">
        <title>Enhancement of the latent 3-isopropylmalate dehydrogenase activity of promiscuous homoisocitrate dehydrogenase by directed evolution.</title>
        <authorList>
            <person name="Suzuki Y."/>
            <person name="Asada K."/>
            <person name="Miyazaki J."/>
            <person name="Tomita T."/>
            <person name="Kuzuyama T."/>
            <person name="Nishiyama M."/>
        </authorList>
    </citation>
    <scope>X-RAY CRYSTALLOGRAPHY (2.40 ANGSTROMS) OF MUTANT VAL-57/ILE-72/MET-85/ALA-86/THR-208/TYR-217/MET-238/MET-310</scope>
    <scope>CATALYTIC ACTIVITY</scope>
    <scope>FUNCTION</scope>
    <scope>MUTAGENESIS OF GLU-57; SER-72; ARG-85; TYR-86; MET-208; PHE-217; VAL-238 AND ARG-310</scope>
    <source>
        <strain>ATCC BAA-163 / DSM 7039 / HB27</strain>
    </source>
</reference>
<reference evidence="9" key="5">
    <citation type="journal article" date="2016" name="Biochem. Biophys. Res. Commun.">
        <title>Determinants of dual substrate specificity revealed by the crystal structure of homoisocitrate dehydrogenase from Thermus thermophilus in complex with homoisocitrate, Mg(2+) and NADH.</title>
        <authorList>
            <person name="Takahashi K."/>
            <person name="Tomita T."/>
            <person name="Kuzuyama T."/>
            <person name="Nishiyama M."/>
        </authorList>
    </citation>
    <scope>X-RAY CRYSTALLOGRAPHY (2.50 ANGSTROMS) IN COMPLEX WITH (1R,2S)-HOMOISOCITRATE; MAGNESIUM AND NAD</scope>
    <scope>FUNCTION</scope>
    <scope>CATALYTIC ACTIVITY</scope>
    <scope>COFACTOR</scope>
    <scope>BIOPHYSICOCHEMICAL PROPERTIES</scope>
</reference>
<accession>Q72IW9</accession>
<accession>Q8RQU4</accession>
<feature type="chain" id="PRO_0000422304" description="Isocitrate/homoisocitrate dehydrogenase">
    <location>
        <begin position="1"/>
        <end position="334"/>
    </location>
</feature>
<feature type="binding site" evidence="4 9">
    <location>
        <begin position="70"/>
        <end position="72"/>
    </location>
    <ligand>
        <name>NADH</name>
        <dbReference type="ChEBI" id="CHEBI:57945"/>
    </ligand>
</feature>
<feature type="binding site" description="in other chain" evidence="4 9">
    <location>
        <position position="72"/>
    </location>
    <ligand>
        <name>(2R,3S)-homoisocitrate</name>
        <dbReference type="ChEBI" id="CHEBI:15404"/>
        <note>ligand shared between homodimeric partners</note>
    </ligand>
</feature>
<feature type="binding site" description="in other chain" evidence="4 9">
    <location>
        <position position="85"/>
    </location>
    <ligand>
        <name>(2R,3S)-homoisocitrate</name>
        <dbReference type="ChEBI" id="CHEBI:15404"/>
        <note>ligand shared between homodimeric partners</note>
    </ligand>
</feature>
<feature type="binding site" description="in other chain" evidence="4 9">
    <location>
        <position position="88"/>
    </location>
    <ligand>
        <name>(2R,3S)-homoisocitrate</name>
        <dbReference type="ChEBI" id="CHEBI:15404"/>
        <note>ligand shared between homodimeric partners</note>
    </ligand>
</feature>
<feature type="binding site" description="in other chain" evidence="4 9">
    <location>
        <position position="98"/>
    </location>
    <ligand>
        <name>(2R,3S)-homoisocitrate</name>
        <dbReference type="ChEBI" id="CHEBI:15404"/>
        <note>ligand shared between homodimeric partners</note>
    </ligand>
</feature>
<feature type="binding site" description="in other chain" evidence="4 9">
    <location>
        <position position="118"/>
    </location>
    <ligand>
        <name>(2R,3S)-homoisocitrate</name>
        <dbReference type="ChEBI" id="CHEBI:15404"/>
        <note>ligand shared between homodimeric partners</note>
    </ligand>
</feature>
<feature type="binding site" description="in other chain" evidence="4 9">
    <location>
        <position position="125"/>
    </location>
    <ligand>
        <name>(2R,3S)-homoisocitrate</name>
        <dbReference type="ChEBI" id="CHEBI:15404"/>
        <note>ligand shared between homodimeric partners</note>
    </ligand>
</feature>
<feature type="binding site" evidence="4 9">
    <location>
        <position position="171"/>
    </location>
    <ligand>
        <name>(2R,3S)-homoisocitrate</name>
        <dbReference type="ChEBI" id="CHEBI:15404"/>
        <note>ligand shared between homodimeric partners</note>
    </ligand>
</feature>
<feature type="binding site" evidence="4 9">
    <location>
        <position position="173"/>
    </location>
    <ligand>
        <name>(2R,3S)-homoisocitrate</name>
        <dbReference type="ChEBI" id="CHEBI:15404"/>
        <note>ligand shared between homodimeric partners</note>
    </ligand>
</feature>
<feature type="binding site" evidence="4 9">
    <location>
        <position position="173"/>
    </location>
    <ligand>
        <name>NADH</name>
        <dbReference type="ChEBI" id="CHEBI:57945"/>
    </ligand>
</feature>
<feature type="binding site" evidence="4 8">
    <location>
        <position position="204"/>
    </location>
    <ligand>
        <name>Mg(2+)</name>
        <dbReference type="ChEBI" id="CHEBI:18420"/>
    </ligand>
</feature>
<feature type="binding site" evidence="4 8">
    <location>
        <position position="228"/>
    </location>
    <ligand>
        <name>Mg(2+)</name>
        <dbReference type="ChEBI" id="CHEBI:18420"/>
    </ligand>
</feature>
<feature type="binding site" evidence="4 8">
    <location>
        <position position="232"/>
    </location>
    <ligand>
        <name>Mg(2+)</name>
        <dbReference type="ChEBI" id="CHEBI:18420"/>
    </ligand>
</feature>
<feature type="binding site" evidence="4 9">
    <location>
        <begin position="261"/>
        <end position="265"/>
    </location>
    <ligand>
        <name>NADH</name>
        <dbReference type="ChEBI" id="CHEBI:57945"/>
    </ligand>
</feature>
<feature type="binding site" evidence="4 9">
    <location>
        <position position="273"/>
    </location>
    <ligand>
        <name>NADH</name>
        <dbReference type="ChEBI" id="CHEBI:57945"/>
    </ligand>
</feature>
<feature type="site" description="Important for substrate specificity and discrimination against 3-isopropylmalate">
    <location>
        <position position="85"/>
    </location>
</feature>
<feature type="mutagenesis site" description="Confers enzyme activity with 3-isopropylmalate; when associated with I-72; M-85; A-86; T-208; Y-217; M-238 and M-310." evidence="3">
    <original>E</original>
    <variation>V</variation>
    <location>
        <position position="57"/>
    </location>
</feature>
<feature type="mutagenesis site" description="Confers enzyme activity with 3-isopropylmalate; when associated with V-57; M-85; A-86; T-208; Y-217; M-238 and M-310." evidence="3">
    <original>S</original>
    <variation>I</variation>
    <location>
        <position position="72"/>
    </location>
</feature>
<feature type="mutagenesis site" description="Reduces activity with homoisocitrate. Abolishes activity with isocitrate. No activity with 3-isopropylmalate.">
    <original>PGFFGAIRY</original>
    <variation>EGYSSPIVA</variation>
    <location>
        <begin position="78"/>
        <end position="86"/>
    </location>
</feature>
<feature type="mutagenesis site" description="Reduces activity with homoisocitrate. Reduces activity with isocitrate. No activity with 3-isopropylmalate.">
    <original>PGFFGA</original>
    <variation>EGYSSP</variation>
    <location>
        <begin position="78"/>
        <end position="83"/>
    </location>
</feature>
<feature type="mutagenesis site" description="Strongly reduces activity with homoisocitrate. Reduces activity with isocitrate. No activity with 3-isopropylmalate.">
    <original>FFGA</original>
    <variation>YSSP</variation>
    <location>
        <begin position="80"/>
        <end position="83"/>
    </location>
</feature>
<feature type="mutagenesis site" description="Confers enzyme activity with 3-isopropylmalate; when associated with V-57; I-72; A-86; T-208; Y-217; M-238 and M-310." evidence="1 3">
    <original>R</original>
    <variation>M</variation>
    <location>
        <position position="85"/>
    </location>
</feature>
<feature type="mutagenesis site" description="Confers low enzyme activity with 3-isopropylmalate. Reduces activity with homoisocitrate. Abolishes activity with isocitrate." evidence="1 3">
    <original>R</original>
    <variation>V</variation>
    <location>
        <position position="85"/>
    </location>
</feature>
<feature type="mutagenesis site" description="Confers enzyme activity with 3-isopropylmalate; when associated with V-57; I-72; M-85; T-208; Y-217; M-238 and M-310." evidence="3">
    <original>Y</original>
    <variation>A</variation>
    <location>
        <position position="86"/>
    </location>
</feature>
<feature type="mutagenesis site" description="Reduces catalytic efficiency with isocitrate." evidence="2">
    <original>Y</original>
    <variation>A</variation>
    <location>
        <position position="125"/>
    </location>
</feature>
<feature type="mutagenesis site" description="Formation of homodimers instead of homotetramers. Increased affinity for isocitrate. Reduces enzyme activity with isocitrate." evidence="2">
    <original>V</original>
    <variation>M</variation>
    <location>
        <position position="135"/>
    </location>
</feature>
<feature type="mutagenesis site" description="Confers enzyme activity with 3-isopropylmalate; when associated with V-57; I-72; M-85; A-86; T-208; Y-217; M-238 and M-310." evidence="3">
    <original>M</original>
    <variation>T</variation>
    <location>
        <position position="208"/>
    </location>
</feature>
<feature type="mutagenesis site" description="Confers enzyme activity with 3-isopropylmalate; when associated with V-57; I-72; M-85; A-86; T-208; M-238 and M-310." evidence="3">
    <original>F</original>
    <variation>Y</variation>
    <location>
        <position position="217"/>
    </location>
</feature>
<feature type="mutagenesis site" description="Confers enzyme activity with 3-isopropylmalate; when associated with V-57; I-72; M-85; A-86; T-208; Y-217; and M-310." evidence="3">
    <original>V</original>
    <variation>M</variation>
    <location>
        <position position="238"/>
    </location>
</feature>
<feature type="mutagenesis site" description="Confers enzyme activity with 3-isopropylmalate; when associated with V-57; I-72; M-85; A-86; T-208; Y-217; and M-238." evidence="3">
    <original>R</original>
    <variation>M</variation>
    <location>
        <position position="310"/>
    </location>
</feature>
<feature type="strand" evidence="10">
    <location>
        <begin position="3"/>
        <end position="11"/>
    </location>
</feature>
<feature type="helix" evidence="10">
    <location>
        <begin position="14"/>
        <end position="26"/>
    </location>
</feature>
<feature type="turn" evidence="10">
    <location>
        <begin position="27"/>
        <end position="29"/>
    </location>
</feature>
<feature type="strand" evidence="10">
    <location>
        <begin position="32"/>
        <end position="37"/>
    </location>
</feature>
<feature type="helix" evidence="10">
    <location>
        <begin position="41"/>
        <end position="47"/>
    </location>
</feature>
<feature type="strand" evidence="10">
    <location>
        <begin position="48"/>
        <end position="51"/>
    </location>
</feature>
<feature type="helix" evidence="10">
    <location>
        <begin position="53"/>
        <end position="60"/>
    </location>
</feature>
<feature type="strand" evidence="10">
    <location>
        <begin position="62"/>
        <end position="69"/>
    </location>
</feature>
<feature type="strand" evidence="11">
    <location>
        <begin position="74"/>
        <end position="76"/>
    </location>
</feature>
<feature type="helix" evidence="10">
    <location>
        <begin position="83"/>
        <end position="90"/>
    </location>
</feature>
<feature type="strand" evidence="10">
    <location>
        <begin position="95"/>
        <end position="101"/>
    </location>
</feature>
<feature type="strand" evidence="10">
    <location>
        <begin position="113"/>
        <end position="119"/>
    </location>
</feature>
<feature type="helix" evidence="10">
    <location>
        <begin position="121"/>
        <end position="123"/>
    </location>
</feature>
<feature type="helix" evidence="12">
    <location>
        <begin position="124"/>
        <end position="126"/>
    </location>
</feature>
<feature type="strand" evidence="10">
    <location>
        <begin position="129"/>
        <end position="132"/>
    </location>
</feature>
<feature type="strand" evidence="10">
    <location>
        <begin position="135"/>
        <end position="143"/>
    </location>
</feature>
<feature type="helix" evidence="10">
    <location>
        <begin position="144"/>
        <end position="159"/>
    </location>
</feature>
<feature type="strand" evidence="10">
    <location>
        <begin position="165"/>
        <end position="170"/>
    </location>
</feature>
<feature type="turn" evidence="10">
    <location>
        <begin position="172"/>
        <end position="174"/>
    </location>
</feature>
<feature type="helix" evidence="10">
    <location>
        <begin position="178"/>
        <end position="190"/>
    </location>
</feature>
<feature type="strand" evidence="10">
    <location>
        <begin position="196"/>
        <end position="202"/>
    </location>
</feature>
<feature type="helix" evidence="10">
    <location>
        <begin position="203"/>
        <end position="212"/>
    </location>
</feature>
<feature type="helix" evidence="10">
    <location>
        <begin position="214"/>
        <end position="216"/>
    </location>
</feature>
<feature type="strand" evidence="10">
    <location>
        <begin position="218"/>
        <end position="222"/>
    </location>
</feature>
<feature type="helix" evidence="10">
    <location>
        <begin position="224"/>
        <end position="237"/>
    </location>
</feature>
<feature type="turn" evidence="12">
    <location>
        <begin position="241"/>
        <end position="243"/>
    </location>
</feature>
<feature type="strand" evidence="10">
    <location>
        <begin position="245"/>
        <end position="249"/>
    </location>
</feature>
<feature type="strand" evidence="10">
    <location>
        <begin position="254"/>
        <end position="260"/>
    </location>
</feature>
<feature type="helix" evidence="10">
    <location>
        <begin position="264"/>
        <end position="266"/>
    </location>
</feature>
<feature type="helix" evidence="10">
    <location>
        <begin position="275"/>
        <end position="288"/>
    </location>
</feature>
<feature type="helix" evidence="10">
    <location>
        <begin position="291"/>
        <end position="307"/>
    </location>
</feature>
<feature type="helix" evidence="10">
    <location>
        <begin position="312"/>
        <end position="314"/>
    </location>
</feature>
<feature type="helix" evidence="10">
    <location>
        <begin position="320"/>
        <end position="332"/>
    </location>
</feature>
<keyword id="KW-0002">3D-structure</keyword>
<keyword id="KW-0028">Amino-acid biosynthesis</keyword>
<keyword id="KW-0457">Lysine biosynthesis</keyword>
<keyword id="KW-0460">Magnesium</keyword>
<keyword id="KW-0479">Metal-binding</keyword>
<keyword id="KW-0520">NAD</keyword>
<keyword id="KW-0560">Oxidoreductase</keyword>
<evidence type="ECO:0000269" key="1">
    <source>
    </source>
</evidence>
<evidence type="ECO:0000269" key="2">
    <source>
    </source>
</evidence>
<evidence type="ECO:0000269" key="3">
    <source>
    </source>
</evidence>
<evidence type="ECO:0000269" key="4">
    <source>
    </source>
</evidence>
<evidence type="ECO:0000303" key="5">
    <source>
    </source>
</evidence>
<evidence type="ECO:0000305" key="6"/>
<evidence type="ECO:0000305" key="7">
    <source>
    </source>
</evidence>
<evidence type="ECO:0000312" key="8">
    <source>
        <dbReference type="PDB" id="4YB4"/>
    </source>
</evidence>
<evidence type="ECO:0007744" key="9">
    <source>
        <dbReference type="PDB" id="4YB4"/>
    </source>
</evidence>
<evidence type="ECO:0007829" key="10">
    <source>
        <dbReference type="PDB" id="1X0L"/>
    </source>
</evidence>
<evidence type="ECO:0007829" key="11">
    <source>
        <dbReference type="PDB" id="3AH3"/>
    </source>
</evidence>
<evidence type="ECO:0007829" key="12">
    <source>
        <dbReference type="PDB" id="4YB4"/>
    </source>
</evidence>
<name>HICDH_THET2</name>
<sequence length="334" mass="35922">MAYRICLIEGDGIGHEVIPAARRVLEATGLPLEFVEAEAGWETFERRGTSVPEETVEKILSCHATLFGAATSPTRKVPGFFGAIRYLRRRLDLYANVRPAKSRPVPGSRPGVDLVIVRENTEGLYVEQERRYLDVAIADAVISKKASERIGRAALRIAEGRPRKTLHIAHKANVLPLTQGLFLDTVKEVAKDFPLVNVQDIIVDNCAMQLVMRPERFDVIVTTNLLGDILSDLAAGLVGGLGLAPSGNIGDTTAVFEPVHGSAPDIAGKGIANPTAAILSAAMMLDYLGEKEAAKRVEKAVDLVLERGPRTPDLGGDATTEAFTEAVVEALKSL</sequence>
<dbReference type="EC" id="1.1.1.286" evidence="1 4"/>
<dbReference type="EMBL" id="AB075751">
    <property type="protein sequence ID" value="BAB88861.1"/>
    <property type="molecule type" value="Genomic_DNA"/>
</dbReference>
<dbReference type="EMBL" id="AE017221">
    <property type="protein sequence ID" value="AAS81354.1"/>
    <property type="molecule type" value="Genomic_DNA"/>
</dbReference>
<dbReference type="RefSeq" id="WP_011173431.1">
    <property type="nucleotide sequence ID" value="NC_005835.1"/>
</dbReference>
<dbReference type="PDB" id="1X0L">
    <property type="method" value="X-ray"/>
    <property type="resolution" value="1.85 A"/>
    <property type="chains" value="A/B=2-334"/>
</dbReference>
<dbReference type="PDB" id="3AH3">
    <property type="method" value="X-ray"/>
    <property type="resolution" value="2.40 A"/>
    <property type="chains" value="A/B/C/D=1-334"/>
</dbReference>
<dbReference type="PDB" id="4YB4">
    <property type="method" value="X-ray"/>
    <property type="resolution" value="2.50 A"/>
    <property type="chains" value="A/B/C/D=1-334"/>
</dbReference>
<dbReference type="PDBsum" id="1X0L"/>
<dbReference type="PDBsum" id="3AH3"/>
<dbReference type="PDBsum" id="4YB4"/>
<dbReference type="SMR" id="Q72IW9"/>
<dbReference type="GeneID" id="3169501"/>
<dbReference type="KEGG" id="tth:TT_C1012"/>
<dbReference type="eggNOG" id="COG0473">
    <property type="taxonomic scope" value="Bacteria"/>
</dbReference>
<dbReference type="HOGENOM" id="CLU_031953_0_1_0"/>
<dbReference type="OrthoDB" id="9806254at2"/>
<dbReference type="BRENDA" id="1.1.1.286">
    <property type="organism ID" value="2305"/>
</dbReference>
<dbReference type="BRENDA" id="1.1.1.85">
    <property type="organism ID" value="2305"/>
</dbReference>
<dbReference type="SABIO-RK" id="Q72IW9"/>
<dbReference type="UniPathway" id="UPA00033">
    <property type="reaction ID" value="UER00030"/>
</dbReference>
<dbReference type="EvolutionaryTrace" id="Q72IW9"/>
<dbReference type="Proteomes" id="UP000000592">
    <property type="component" value="Chromosome"/>
</dbReference>
<dbReference type="GO" id="GO:0047046">
    <property type="term" value="F:homoisocitrate dehydrogenase activity"/>
    <property type="evidence" value="ECO:0000314"/>
    <property type="project" value="UniProtKB"/>
</dbReference>
<dbReference type="GO" id="GO:0004449">
    <property type="term" value="F:isocitrate dehydrogenase (NAD+) activity"/>
    <property type="evidence" value="ECO:0007669"/>
    <property type="project" value="RHEA"/>
</dbReference>
<dbReference type="GO" id="GO:0046872">
    <property type="term" value="F:metal ion binding"/>
    <property type="evidence" value="ECO:0007669"/>
    <property type="project" value="UniProtKB-KW"/>
</dbReference>
<dbReference type="GO" id="GO:0006102">
    <property type="term" value="P:isocitrate metabolic process"/>
    <property type="evidence" value="ECO:0007669"/>
    <property type="project" value="TreeGrafter"/>
</dbReference>
<dbReference type="GO" id="GO:0019878">
    <property type="term" value="P:lysine biosynthetic process via aminoadipic acid"/>
    <property type="evidence" value="ECO:0000315"/>
    <property type="project" value="UniProtKB"/>
</dbReference>
<dbReference type="GO" id="GO:0006099">
    <property type="term" value="P:tricarboxylic acid cycle"/>
    <property type="evidence" value="ECO:0007669"/>
    <property type="project" value="TreeGrafter"/>
</dbReference>
<dbReference type="FunFam" id="3.40.718.10:FF:000019">
    <property type="entry name" value="Homoisocitrate dehydrogenase"/>
    <property type="match status" value="1"/>
</dbReference>
<dbReference type="Gene3D" id="3.40.718.10">
    <property type="entry name" value="Isopropylmalate Dehydrogenase"/>
    <property type="match status" value="1"/>
</dbReference>
<dbReference type="InterPro" id="IPR024084">
    <property type="entry name" value="IsoPropMal-DH-like_dom"/>
</dbReference>
<dbReference type="PANTHER" id="PTHR11835">
    <property type="entry name" value="DECARBOXYLATING DEHYDROGENASES-ISOCITRATE, ISOPROPYLMALATE, TARTRATE"/>
    <property type="match status" value="1"/>
</dbReference>
<dbReference type="PANTHER" id="PTHR11835:SF34">
    <property type="entry name" value="ISOCITRATE DEHYDROGENASE [NAD] SUBUNIT ALPHA, MITOCHONDRIAL"/>
    <property type="match status" value="1"/>
</dbReference>
<dbReference type="Pfam" id="PF00180">
    <property type="entry name" value="Iso_dh"/>
    <property type="match status" value="1"/>
</dbReference>
<dbReference type="SMART" id="SM01329">
    <property type="entry name" value="Iso_dh"/>
    <property type="match status" value="1"/>
</dbReference>
<dbReference type="SUPFAM" id="SSF53659">
    <property type="entry name" value="Isocitrate/Isopropylmalate dehydrogenase-like"/>
    <property type="match status" value="1"/>
</dbReference>
<proteinExistence type="evidence at protein level"/>
<protein>
    <recommendedName>
        <fullName evidence="7">Isocitrate/homoisocitrate dehydrogenase</fullName>
        <ecNumber evidence="1 4">1.1.1.286</ecNumber>
    </recommendedName>
    <alternativeName>
        <fullName evidence="5">Homoisocitrate dehydrogenase</fullName>
        <shortName evidence="5">HICDH</shortName>
    </alternativeName>
</protein>
<gene>
    <name type="primary">hicd</name>
    <name type="synonym">hdh</name>
    <name type="synonym">hicdh</name>
    <name type="ordered locus">TT_C1012</name>
</gene>
<organism>
    <name type="scientific">Thermus thermophilus (strain ATCC BAA-163 / DSM 7039 / HB27)</name>
    <dbReference type="NCBI Taxonomy" id="262724"/>
    <lineage>
        <taxon>Bacteria</taxon>
        <taxon>Thermotogati</taxon>
        <taxon>Deinococcota</taxon>
        <taxon>Deinococci</taxon>
        <taxon>Thermales</taxon>
        <taxon>Thermaceae</taxon>
        <taxon>Thermus</taxon>
    </lineage>
</organism>